<reference key="1">
    <citation type="journal article" date="2007" name="PLoS ONE">
        <title>Paradoxical DNA repair and peroxide resistance gene conservation in Bacillus pumilus SAFR-032.</title>
        <authorList>
            <person name="Gioia J."/>
            <person name="Yerrapragada S."/>
            <person name="Qin X."/>
            <person name="Jiang H."/>
            <person name="Igboeli O.C."/>
            <person name="Muzny D."/>
            <person name="Dugan-Rocha S."/>
            <person name="Ding Y."/>
            <person name="Hawes A."/>
            <person name="Liu W."/>
            <person name="Perez L."/>
            <person name="Kovar C."/>
            <person name="Dinh H."/>
            <person name="Lee S."/>
            <person name="Nazareth L."/>
            <person name="Blyth P."/>
            <person name="Holder M."/>
            <person name="Buhay C."/>
            <person name="Tirumalai M.R."/>
            <person name="Liu Y."/>
            <person name="Dasgupta I."/>
            <person name="Bokhetache L."/>
            <person name="Fujita M."/>
            <person name="Karouia F."/>
            <person name="Eswara Moorthy P."/>
            <person name="Siefert J."/>
            <person name="Uzman A."/>
            <person name="Buzumbo P."/>
            <person name="Verma A."/>
            <person name="Zwiya H."/>
            <person name="McWilliams B.D."/>
            <person name="Olowu A."/>
            <person name="Clinkenbeard K.D."/>
            <person name="Newcombe D."/>
            <person name="Golebiewski L."/>
            <person name="Petrosino J.F."/>
            <person name="Nicholson W.L."/>
            <person name="Fox G.E."/>
            <person name="Venkateswaran K."/>
            <person name="Highlander S.K."/>
            <person name="Weinstock G.M."/>
        </authorList>
    </citation>
    <scope>NUCLEOTIDE SEQUENCE [LARGE SCALE GENOMIC DNA]</scope>
    <source>
        <strain>SAFR-032</strain>
    </source>
</reference>
<protein>
    <recommendedName>
        <fullName evidence="1">UPF0154 protein BPUM_1692</fullName>
    </recommendedName>
</protein>
<organism>
    <name type="scientific">Bacillus pumilus (strain SAFR-032)</name>
    <dbReference type="NCBI Taxonomy" id="315750"/>
    <lineage>
        <taxon>Bacteria</taxon>
        <taxon>Bacillati</taxon>
        <taxon>Bacillota</taxon>
        <taxon>Bacilli</taxon>
        <taxon>Bacillales</taxon>
        <taxon>Bacillaceae</taxon>
        <taxon>Bacillus</taxon>
    </lineage>
</organism>
<comment type="subcellular location">
    <subcellularLocation>
        <location evidence="1">Cell membrane</location>
        <topology evidence="1">Single-pass membrane protein</topology>
    </subcellularLocation>
</comment>
<comment type="similarity">
    <text evidence="1">Belongs to the UPF0154 family.</text>
</comment>
<keyword id="KW-1003">Cell membrane</keyword>
<keyword id="KW-0472">Membrane</keyword>
<keyword id="KW-0812">Transmembrane</keyword>
<keyword id="KW-1133">Transmembrane helix</keyword>
<gene>
    <name type="ordered locus">BPUM_1692</name>
</gene>
<dbReference type="EMBL" id="CP000813">
    <property type="protein sequence ID" value="ABV62370.1"/>
    <property type="molecule type" value="Genomic_DNA"/>
</dbReference>
<dbReference type="RefSeq" id="WP_003212379.1">
    <property type="nucleotide sequence ID" value="NZ_VEIS01000012.1"/>
</dbReference>
<dbReference type="SMR" id="A8FDQ3"/>
<dbReference type="STRING" id="315750.BPUM_1692"/>
<dbReference type="KEGG" id="bpu:BPUM_1692"/>
<dbReference type="eggNOG" id="COG3763">
    <property type="taxonomic scope" value="Bacteria"/>
</dbReference>
<dbReference type="HOGENOM" id="CLU_180108_0_1_9"/>
<dbReference type="Proteomes" id="UP000001355">
    <property type="component" value="Chromosome"/>
</dbReference>
<dbReference type="GO" id="GO:0005886">
    <property type="term" value="C:plasma membrane"/>
    <property type="evidence" value="ECO:0007669"/>
    <property type="project" value="UniProtKB-SubCell"/>
</dbReference>
<dbReference type="HAMAP" id="MF_00363">
    <property type="entry name" value="UPF0154"/>
    <property type="match status" value="1"/>
</dbReference>
<dbReference type="InterPro" id="IPR005359">
    <property type="entry name" value="UPF0154"/>
</dbReference>
<dbReference type="NCBIfam" id="NF002503">
    <property type="entry name" value="PRK01844.1"/>
    <property type="match status" value="1"/>
</dbReference>
<dbReference type="Pfam" id="PF03672">
    <property type="entry name" value="UPF0154"/>
    <property type="match status" value="1"/>
</dbReference>
<name>Y1692_BACP2</name>
<proteinExistence type="inferred from homology"/>
<sequence>MDLWVVILVGVVALLAGVALGFFIARKYMMSYLKKNPPINEQMLRMMMMQMGMKPSQKKINQMMKAMNNQAK</sequence>
<evidence type="ECO:0000255" key="1">
    <source>
        <dbReference type="HAMAP-Rule" id="MF_00363"/>
    </source>
</evidence>
<accession>A8FDQ3</accession>
<feature type="chain" id="PRO_1000059894" description="UPF0154 protein BPUM_1692">
    <location>
        <begin position="1"/>
        <end position="72"/>
    </location>
</feature>
<feature type="transmembrane region" description="Helical" evidence="1">
    <location>
        <begin position="4"/>
        <end position="24"/>
    </location>
</feature>